<dbReference type="EMBL" id="AB008268">
    <property type="protein sequence ID" value="BAB09860.1"/>
    <property type="molecule type" value="Genomic_DNA"/>
</dbReference>
<dbReference type="EMBL" id="CP002688">
    <property type="protein sequence ID" value="AED97866.1"/>
    <property type="molecule type" value="Genomic_DNA"/>
</dbReference>
<dbReference type="EMBL" id="AY056329">
    <property type="protein sequence ID" value="AAL07178.1"/>
    <property type="molecule type" value="mRNA"/>
</dbReference>
<dbReference type="EMBL" id="BT000654">
    <property type="protein sequence ID" value="AAN31801.1"/>
    <property type="molecule type" value="mRNA"/>
</dbReference>
<dbReference type="EMBL" id="BT015925">
    <property type="protein sequence ID" value="AAU95461.1"/>
    <property type="molecule type" value="mRNA"/>
</dbReference>
<dbReference type="SMR" id="Q9FMF7"/>
<dbReference type="BioGRID" id="21792">
    <property type="interactions" value="2"/>
</dbReference>
<dbReference type="FunCoup" id="Q9FMF7">
    <property type="interactions" value="843"/>
</dbReference>
<dbReference type="IntAct" id="Q9FMF7">
    <property type="interactions" value="1"/>
</dbReference>
<dbReference type="STRING" id="3702.Q9FMF7"/>
<dbReference type="SwissPalm" id="Q9FMF7"/>
<dbReference type="PaxDb" id="3702-AT5G64290.1"/>
<dbReference type="ProteomicsDB" id="222150"/>
<dbReference type="EnsemblPlants" id="AT5G64290.1">
    <property type="protein sequence ID" value="AT5G64290.1"/>
    <property type="gene ID" value="AT5G64290"/>
</dbReference>
<dbReference type="GeneID" id="836550"/>
<dbReference type="Gramene" id="AT5G64290.1">
    <property type="protein sequence ID" value="AT5G64290.1"/>
    <property type="gene ID" value="AT5G64290"/>
</dbReference>
<dbReference type="KEGG" id="ath:AT5G64290"/>
<dbReference type="Araport" id="AT5G64290"/>
<dbReference type="TAIR" id="AT5G64290">
    <property type="gene designation" value="DIT2.1"/>
</dbReference>
<dbReference type="eggNOG" id="ENOG502QQ8W">
    <property type="taxonomic scope" value="Eukaryota"/>
</dbReference>
<dbReference type="HOGENOM" id="CLU_005170_7_3_1"/>
<dbReference type="InParanoid" id="Q9FMF7"/>
<dbReference type="OMA" id="YAWHFFA"/>
<dbReference type="PhylomeDB" id="Q9FMF7"/>
<dbReference type="SABIO-RK" id="Q9FMF7"/>
<dbReference type="PRO" id="PR:Q9FMF7"/>
<dbReference type="Proteomes" id="UP000006548">
    <property type="component" value="Chromosome 5"/>
</dbReference>
<dbReference type="ExpressionAtlas" id="Q9FMF7">
    <property type="expression patterns" value="baseline and differential"/>
</dbReference>
<dbReference type="GO" id="GO:0009507">
    <property type="term" value="C:chloroplast"/>
    <property type="evidence" value="ECO:0007005"/>
    <property type="project" value="TAIR"/>
</dbReference>
<dbReference type="GO" id="GO:0009941">
    <property type="term" value="C:chloroplast envelope"/>
    <property type="evidence" value="ECO:0007005"/>
    <property type="project" value="TAIR"/>
</dbReference>
<dbReference type="GO" id="GO:0009706">
    <property type="term" value="C:chloroplast inner membrane"/>
    <property type="evidence" value="ECO:0007669"/>
    <property type="project" value="UniProtKB-SubCell"/>
</dbReference>
<dbReference type="GO" id="GO:0009534">
    <property type="term" value="C:chloroplast thylakoid"/>
    <property type="evidence" value="ECO:0007005"/>
    <property type="project" value="TAIR"/>
</dbReference>
<dbReference type="GO" id="GO:0009536">
    <property type="term" value="C:plastid"/>
    <property type="evidence" value="ECO:0007005"/>
    <property type="project" value="TAIR"/>
</dbReference>
<dbReference type="GO" id="GO:0005313">
    <property type="term" value="F:L-glutamate transmembrane transporter activity"/>
    <property type="evidence" value="ECO:0000314"/>
    <property type="project" value="UniProtKB"/>
</dbReference>
<dbReference type="GO" id="GO:0015140">
    <property type="term" value="F:malate transmembrane transporter activity"/>
    <property type="evidence" value="ECO:0000314"/>
    <property type="project" value="UniProtKB"/>
</dbReference>
<dbReference type="GO" id="GO:0015131">
    <property type="term" value="F:oxaloacetate transmembrane transporter activity"/>
    <property type="evidence" value="ECO:0000314"/>
    <property type="project" value="UniProtKB"/>
</dbReference>
<dbReference type="GO" id="GO:0019676">
    <property type="term" value="P:ammonia assimilation cycle"/>
    <property type="evidence" value="ECO:0000315"/>
    <property type="project" value="UniProtKB"/>
</dbReference>
<dbReference type="GO" id="GO:0015813">
    <property type="term" value="P:L-glutamate transmembrane transport"/>
    <property type="evidence" value="ECO:0000314"/>
    <property type="project" value="UniProtKB"/>
</dbReference>
<dbReference type="GO" id="GO:0071423">
    <property type="term" value="P:malate transmembrane transport"/>
    <property type="evidence" value="ECO:0000314"/>
    <property type="project" value="UniProtKB"/>
</dbReference>
<dbReference type="GO" id="GO:0015729">
    <property type="term" value="P:oxaloacetate transport"/>
    <property type="evidence" value="ECO:0000314"/>
    <property type="project" value="UniProtKB"/>
</dbReference>
<dbReference type="GO" id="GO:0009624">
    <property type="term" value="P:response to nematode"/>
    <property type="evidence" value="ECO:0007007"/>
    <property type="project" value="TAIR"/>
</dbReference>
<dbReference type="InterPro" id="IPR030676">
    <property type="entry name" value="CitT-rel"/>
</dbReference>
<dbReference type="InterPro" id="IPR001898">
    <property type="entry name" value="SLC13A/DASS"/>
</dbReference>
<dbReference type="NCBIfam" id="TIGR00785">
    <property type="entry name" value="dass"/>
    <property type="match status" value="1"/>
</dbReference>
<dbReference type="PANTHER" id="PTHR42826">
    <property type="entry name" value="DICARBOXYLATE TRANSPORTER 2.1, CHLOROPLASTIC"/>
    <property type="match status" value="1"/>
</dbReference>
<dbReference type="Pfam" id="PF00939">
    <property type="entry name" value="Na_sulph_symp"/>
    <property type="match status" value="1"/>
</dbReference>
<sequence length="563" mass="59992">MESFALHSLSTTATSTLLSHHHHHHPSRLSLLRRTSSRSPPSTISLRSLSVQPLSFPLLKPIPRFSTRIAAAPQDNAPPPPPPSPSPSPSPQGAKLIPLILSISVGLILRFAVPVPEGVTPQGWQLLSIFLSTIAGLVLSPLPVGAWAFIGLTASIVTKTLSFSAAFSAFTSEVIWLIVISFFFARGFVKTGLGDRIATYFVKWLGKSTLGLSYGLTLSEALIAPAMPSTTARAGGIFLPIIKSLSLSAGSKPNDSSSRKLGSYLIQSQFQCAGNSSALFLTAAAQNLLCLKLAEELGVVISNPWVSWFKAASLPAIISLLCTPLILYKLYPPETKDTPEAPGIAATKLKQMGPVTKNEWIMVGTMLLAVTLWICGETLGIPSVVAAMIGLSILLVLGVLNWDDCLSEKSAWDTLAWFAVLVGMAGQLTNLGVVTWMSDCVAKVLQSLSLSWPAAFGLLQAAYFFIHYLFASQTGHVGALFSAFLAMHIAAGVPGILAALALAYNTNLFGALTHYSSGQAAVYYGAGYVDLPDVFKIGFVMATINAIIWGVVGTFWWKFLGLY</sequence>
<protein>
    <recommendedName>
        <fullName>Dicarboxylate transporter 2.1, chloroplastic</fullName>
    </recommendedName>
    <alternativeName>
        <fullName>AtpDCT1</fullName>
    </alternativeName>
    <alternativeName>
        <fullName>Glutamate/malate translocator</fullName>
    </alternativeName>
</protein>
<feature type="transit peptide" description="Chloroplast" evidence="1">
    <location>
        <begin position="1"/>
        <end position="68"/>
    </location>
</feature>
<feature type="chain" id="PRO_0000419184" description="Dicarboxylate transporter 2.1, chloroplastic">
    <location>
        <begin position="69"/>
        <end position="563"/>
    </location>
</feature>
<feature type="transmembrane region" description="Helical" evidence="1">
    <location>
        <begin position="96"/>
        <end position="116"/>
    </location>
</feature>
<feature type="transmembrane region" description="Helical" evidence="1">
    <location>
        <begin position="134"/>
        <end position="154"/>
    </location>
</feature>
<feature type="transmembrane region" description="Helical" evidence="1">
    <location>
        <begin position="165"/>
        <end position="185"/>
    </location>
</feature>
<feature type="transmembrane region" description="Helical" evidence="1">
    <location>
        <begin position="234"/>
        <end position="254"/>
    </location>
</feature>
<feature type="transmembrane region" description="Helical" evidence="1">
    <location>
        <begin position="261"/>
        <end position="281"/>
    </location>
</feature>
<feature type="transmembrane region" description="Helical" evidence="1">
    <location>
        <begin position="308"/>
        <end position="328"/>
    </location>
</feature>
<feature type="transmembrane region" description="Helical" evidence="1">
    <location>
        <begin position="358"/>
        <end position="378"/>
    </location>
</feature>
<feature type="transmembrane region" description="Helical" evidence="1">
    <location>
        <begin position="379"/>
        <end position="399"/>
    </location>
</feature>
<feature type="transmembrane region" description="Helical" evidence="1">
    <location>
        <begin position="414"/>
        <end position="434"/>
    </location>
</feature>
<feature type="transmembrane region" description="Helical" evidence="1">
    <location>
        <begin position="450"/>
        <end position="470"/>
    </location>
</feature>
<feature type="transmembrane region" description="Helical" evidence="1">
    <location>
        <begin position="483"/>
        <end position="503"/>
    </location>
</feature>
<feature type="transmembrane region" description="Helical" evidence="1">
    <location>
        <begin position="537"/>
        <end position="557"/>
    </location>
</feature>
<feature type="region of interest" description="Disordered" evidence="2">
    <location>
        <begin position="16"/>
        <end position="45"/>
    </location>
</feature>
<feature type="region of interest" description="Disordered" evidence="2">
    <location>
        <begin position="71"/>
        <end position="92"/>
    </location>
</feature>
<feature type="compositionally biased region" description="Low complexity" evidence="2">
    <location>
        <begin position="28"/>
        <end position="45"/>
    </location>
</feature>
<feature type="compositionally biased region" description="Pro residues" evidence="2">
    <location>
        <begin position="76"/>
        <end position="90"/>
    </location>
</feature>
<feature type="mutagenesis site" description="In dct; photorespiratory phenotype leading to non-viable seedlings under normal atmospheric conditions." evidence="4">
    <original>G</original>
    <variation>E</variation>
    <location>
        <position position="206"/>
    </location>
</feature>
<reference key="1">
    <citation type="journal article" date="1997" name="DNA Res.">
        <title>Structural analysis of Arabidopsis thaliana chromosome 5. III. Sequence features of the regions of 1,191,918 bp covered by seventeen physically assigned P1 clones.</title>
        <authorList>
            <person name="Nakamura Y."/>
            <person name="Sato S."/>
            <person name="Kaneko T."/>
            <person name="Kotani H."/>
            <person name="Asamizu E."/>
            <person name="Miyajima N."/>
            <person name="Tabata S."/>
        </authorList>
    </citation>
    <scope>NUCLEOTIDE SEQUENCE [LARGE SCALE GENOMIC DNA]</scope>
    <source>
        <strain>cv. Columbia</strain>
    </source>
</reference>
<reference key="2">
    <citation type="journal article" date="2017" name="Plant J.">
        <title>Araport11: a complete reannotation of the Arabidopsis thaliana reference genome.</title>
        <authorList>
            <person name="Cheng C.Y."/>
            <person name="Krishnakumar V."/>
            <person name="Chan A.P."/>
            <person name="Thibaud-Nissen F."/>
            <person name="Schobel S."/>
            <person name="Town C.D."/>
        </authorList>
    </citation>
    <scope>GENOME REANNOTATION</scope>
    <source>
        <strain>cv. Columbia</strain>
    </source>
</reference>
<reference key="3">
    <citation type="journal article" date="2003" name="Science">
        <title>Empirical analysis of transcriptional activity in the Arabidopsis genome.</title>
        <authorList>
            <person name="Yamada K."/>
            <person name="Lim J."/>
            <person name="Dale J.M."/>
            <person name="Chen H."/>
            <person name="Shinn P."/>
            <person name="Palm C.J."/>
            <person name="Southwick A.M."/>
            <person name="Wu H.C."/>
            <person name="Kim C.J."/>
            <person name="Nguyen M."/>
            <person name="Pham P.K."/>
            <person name="Cheuk R.F."/>
            <person name="Karlin-Newmann G."/>
            <person name="Liu S.X."/>
            <person name="Lam B."/>
            <person name="Sakano H."/>
            <person name="Wu T."/>
            <person name="Yu G."/>
            <person name="Miranda M."/>
            <person name="Quach H.L."/>
            <person name="Tripp M."/>
            <person name="Chang C.H."/>
            <person name="Lee J.M."/>
            <person name="Toriumi M.J."/>
            <person name="Chan M.M."/>
            <person name="Tang C.C."/>
            <person name="Onodera C.S."/>
            <person name="Deng J.M."/>
            <person name="Akiyama K."/>
            <person name="Ansari Y."/>
            <person name="Arakawa T."/>
            <person name="Banh J."/>
            <person name="Banno F."/>
            <person name="Bowser L."/>
            <person name="Brooks S.Y."/>
            <person name="Carninci P."/>
            <person name="Chao Q."/>
            <person name="Choy N."/>
            <person name="Enju A."/>
            <person name="Goldsmith A.D."/>
            <person name="Gurjal M."/>
            <person name="Hansen N.F."/>
            <person name="Hayashizaki Y."/>
            <person name="Johnson-Hopson C."/>
            <person name="Hsuan V.W."/>
            <person name="Iida K."/>
            <person name="Karnes M."/>
            <person name="Khan S."/>
            <person name="Koesema E."/>
            <person name="Ishida J."/>
            <person name="Jiang P.X."/>
            <person name="Jones T."/>
            <person name="Kawai J."/>
            <person name="Kamiya A."/>
            <person name="Meyers C."/>
            <person name="Nakajima M."/>
            <person name="Narusaka M."/>
            <person name="Seki M."/>
            <person name="Sakurai T."/>
            <person name="Satou M."/>
            <person name="Tamse R."/>
            <person name="Vaysberg M."/>
            <person name="Wallender E.K."/>
            <person name="Wong C."/>
            <person name="Yamamura Y."/>
            <person name="Yuan S."/>
            <person name="Shinozaki K."/>
            <person name="Davis R.W."/>
            <person name="Theologis A."/>
            <person name="Ecker J.R."/>
        </authorList>
    </citation>
    <scope>NUCLEOTIDE SEQUENCE [LARGE SCALE MRNA]</scope>
    <source>
        <strain>cv. Columbia</strain>
    </source>
</reference>
<reference key="4">
    <citation type="submission" date="2004-10" db="EMBL/GenBank/DDBJ databases">
        <title>Arabidopsis ORF clones.</title>
        <authorList>
            <person name="Cheuk R.F."/>
            <person name="Chen H."/>
            <person name="Kim C.J."/>
            <person name="Shinn P."/>
            <person name="Ecker J.R."/>
        </authorList>
    </citation>
    <scope>NUCLEOTIDE SEQUENCE [LARGE SCALE MRNA]</scope>
    <source>
        <strain>cv. Columbia</strain>
    </source>
</reference>
<reference key="5">
    <citation type="journal article" date="2002" name="Plant Cell Physiol.">
        <title>Identifying and characterizing plastidic 2-oxoglutarate/malate and dicarboxylate transporters in Arabidopsis thaliana.</title>
        <authorList>
            <person name="Taniguchi M."/>
            <person name="Taniguchi Y."/>
            <person name="Kawasaki M."/>
            <person name="Takeda S."/>
            <person name="Kato T."/>
            <person name="Sato S."/>
            <person name="Tabata S."/>
            <person name="Miyake H."/>
            <person name="Sugiyama T."/>
        </authorList>
    </citation>
    <scope>FUNCTION</scope>
    <scope>BIOPHYSICOCHEMICAL PROPERTIES</scope>
    <scope>TISSUE SPECIFICITY</scope>
    <scope>DISRUPTION PHENOTYPE</scope>
</reference>
<reference key="6">
    <citation type="journal article" date="2003" name="Plant J.">
        <title>The Arabidopsis mutant dct is deficient in the plastidic glutamate/malate translocator DiT2.</title>
        <authorList>
            <person name="Renne P."/>
            <person name="Dressen U."/>
            <person name="Hebbeker U."/>
            <person name="Hille D."/>
            <person name="Flugge U.I."/>
            <person name="Westhoff P."/>
            <person name="Weber A.P."/>
        </authorList>
    </citation>
    <scope>FUNCTION</scope>
    <scope>TISSUE SPECIFICITY</scope>
    <scope>MUTAGENESIS OF GLY-206</scope>
</reference>
<organism>
    <name type="scientific">Arabidopsis thaliana</name>
    <name type="common">Mouse-ear cress</name>
    <dbReference type="NCBI Taxonomy" id="3702"/>
    <lineage>
        <taxon>Eukaryota</taxon>
        <taxon>Viridiplantae</taxon>
        <taxon>Streptophyta</taxon>
        <taxon>Embryophyta</taxon>
        <taxon>Tracheophyta</taxon>
        <taxon>Spermatophyta</taxon>
        <taxon>Magnoliopsida</taxon>
        <taxon>eudicotyledons</taxon>
        <taxon>Gunneridae</taxon>
        <taxon>Pentapetalae</taxon>
        <taxon>rosids</taxon>
        <taxon>malvids</taxon>
        <taxon>Brassicales</taxon>
        <taxon>Brassicaceae</taxon>
        <taxon>Camelineae</taxon>
        <taxon>Arabidopsis</taxon>
    </lineage>
</organism>
<name>DIT21_ARATH</name>
<comment type="function">
    <text evidence="3 4">Glutamate/malate translocator involved with DIT1 in primary ammonia assimilation and in the re-assimilation of ammonia generated by the photorespiratory pathway. Exports the end product of ammonia assimilation, glutamate, from plastids to the cytosol. The precursor for ammonia assimilation, 2-oxoglutarate, is imported from the cytosol by DIT1.</text>
</comment>
<comment type="biophysicochemical properties">
    <kinetics>
        <KM evidence="3">0.41 mM for malate</KM>
        <KM evidence="3">0.23 mM for oxaloacetate</KM>
    </kinetics>
</comment>
<comment type="subcellular location">
    <subcellularLocation>
        <location evidence="5">Plastid</location>
        <location evidence="5">Chloroplast inner membrane</location>
        <topology evidence="5">Multi-pass membrane protein</topology>
    </subcellularLocation>
</comment>
<comment type="tissue specificity">
    <text evidence="3 4">Expressed in roots, rosette and cauline leaves, stems, flowers and siliques.</text>
</comment>
<comment type="disruption phenotype">
    <text evidence="3">Non-viable seedlings under normal atmospheric conditions, but grow normally under non-photorespiratory conditions high CO(2) conditions.</text>
</comment>
<comment type="similarity">
    <text evidence="5">Belongs to the SLC13A/DASS transporter (TC 2.A.47) family. DIT1 subfamily.</text>
</comment>
<evidence type="ECO:0000255" key="1"/>
<evidence type="ECO:0000256" key="2">
    <source>
        <dbReference type="SAM" id="MobiDB-lite"/>
    </source>
</evidence>
<evidence type="ECO:0000269" key="3">
    <source>
    </source>
</evidence>
<evidence type="ECO:0000269" key="4">
    <source>
    </source>
</evidence>
<evidence type="ECO:0000305" key="5"/>
<accession>Q9FMF7</accession>
<proteinExistence type="evidence at protein level"/>
<gene>
    <name type="primary">DIT2-1</name>
    <name type="synonym">DIT2</name>
    <name type="ordered locus">At5g64290</name>
    <name type="ORF">MSJ1.13</name>
</gene>
<keyword id="KW-0150">Chloroplast</keyword>
<keyword id="KW-0472">Membrane</keyword>
<keyword id="KW-0934">Plastid</keyword>
<keyword id="KW-1001">Plastid inner membrane</keyword>
<keyword id="KW-1185">Reference proteome</keyword>
<keyword id="KW-0809">Transit peptide</keyword>
<keyword id="KW-0812">Transmembrane</keyword>
<keyword id="KW-1133">Transmembrane helix</keyword>
<keyword id="KW-0813">Transport</keyword>